<evidence type="ECO:0000250" key="1"/>
<evidence type="ECO:0000255" key="2">
    <source>
        <dbReference type="PROSITE-ProRule" id="PRU00433"/>
    </source>
</evidence>
<evidence type="ECO:0000305" key="3"/>
<feature type="initiator methionine" description="Removed" evidence="1">
    <location>
        <position position="1"/>
    </location>
</feature>
<feature type="chain" id="PRO_0000266015" description="Cytochrome c, somatic A">
    <location>
        <begin position="2"/>
        <end position="105"/>
    </location>
</feature>
<feature type="binding site" description="covalent" evidence="2">
    <location>
        <position position="15"/>
    </location>
    <ligand>
        <name>heme c</name>
        <dbReference type="ChEBI" id="CHEBI:61717"/>
    </ligand>
</feature>
<feature type="binding site" description="covalent" evidence="2">
    <location>
        <position position="18"/>
    </location>
    <ligand>
        <name>heme c</name>
        <dbReference type="ChEBI" id="CHEBI:61717"/>
    </ligand>
</feature>
<feature type="binding site" description="axial binding residue" evidence="2">
    <location>
        <position position="19"/>
    </location>
    <ligand>
        <name>heme c</name>
        <dbReference type="ChEBI" id="CHEBI:61717"/>
    </ligand>
    <ligandPart>
        <name>Fe</name>
        <dbReference type="ChEBI" id="CHEBI:18248"/>
    </ligandPart>
</feature>
<feature type="binding site" description="axial binding residue" evidence="2">
    <location>
        <position position="81"/>
    </location>
    <ligand>
        <name>heme c</name>
        <dbReference type="ChEBI" id="CHEBI:61717"/>
    </ligand>
    <ligandPart>
        <name>Fe</name>
        <dbReference type="ChEBI" id="CHEBI:18248"/>
    </ligandPart>
</feature>
<feature type="modified residue" description="N-acetylglycine" evidence="1">
    <location>
        <position position="2"/>
    </location>
</feature>
<protein>
    <recommendedName>
        <fullName>Cytochrome c, somatic A</fullName>
    </recommendedName>
</protein>
<comment type="function">
    <text evidence="1">Electron carrier protein. The oxidized form of the cytochrome c heme group can accept an electron from the heme group of the cytochrome c1 subunit of cytochrome reductase. Cytochrome c then transfers this electron to the cytochrome oxidase complex, the final protein carrier in the mitochondrial electron-transport chain (By similarity).</text>
</comment>
<comment type="subcellular location">
    <subcellularLocation>
        <location evidence="1">Mitochondrion intermembrane space</location>
    </subcellularLocation>
    <text evidence="1">Loosely associated with the inner membrane.</text>
</comment>
<comment type="PTM">
    <text evidence="1">Binds 1 heme c group covalently per subunit.</text>
</comment>
<comment type="similarity">
    <text evidence="3">Belongs to the cytochrome c family.</text>
</comment>
<comment type="online information" name="Protein Spotlight">
    <link uri="https://www.proteinspotlight.org/back_issues/076"/>
    <text>Life shuttle - Issue 76 of November 2006</text>
</comment>
<organism>
    <name type="scientific">Xenopus laevis</name>
    <name type="common">African clawed frog</name>
    <dbReference type="NCBI Taxonomy" id="8355"/>
    <lineage>
        <taxon>Eukaryota</taxon>
        <taxon>Metazoa</taxon>
        <taxon>Chordata</taxon>
        <taxon>Craniata</taxon>
        <taxon>Vertebrata</taxon>
        <taxon>Euteleostomi</taxon>
        <taxon>Amphibia</taxon>
        <taxon>Batrachia</taxon>
        <taxon>Anura</taxon>
        <taxon>Pipoidea</taxon>
        <taxon>Pipidae</taxon>
        <taxon>Xenopodinae</taxon>
        <taxon>Xenopus</taxon>
        <taxon>Xenopus</taxon>
    </lineage>
</organism>
<proteinExistence type="inferred from homology"/>
<dbReference type="EMBL" id="BC072801">
    <property type="protein sequence ID" value="AAH72801.1"/>
    <property type="molecule type" value="mRNA"/>
</dbReference>
<dbReference type="RefSeq" id="NP_001085462.1">
    <property type="nucleotide sequence ID" value="NM_001091993.1"/>
</dbReference>
<dbReference type="SMR" id="Q6GQE4"/>
<dbReference type="GeneID" id="443888"/>
<dbReference type="KEGG" id="xla:443888"/>
<dbReference type="AGR" id="Xenbase:XB-GENE-6251722"/>
<dbReference type="CTD" id="443888"/>
<dbReference type="Xenbase" id="XB-GENE-6251722">
    <property type="gene designation" value="cyct.S"/>
</dbReference>
<dbReference type="OrthoDB" id="9854531at2759"/>
<dbReference type="Proteomes" id="UP000186698">
    <property type="component" value="Chromosome 9_10S"/>
</dbReference>
<dbReference type="Bgee" id="443888">
    <property type="expression patterns" value="Expressed in testis and 19 other cell types or tissues"/>
</dbReference>
<dbReference type="GO" id="GO:0005758">
    <property type="term" value="C:mitochondrial intermembrane space"/>
    <property type="evidence" value="ECO:0000318"/>
    <property type="project" value="GO_Central"/>
</dbReference>
<dbReference type="GO" id="GO:0009055">
    <property type="term" value="F:electron transfer activity"/>
    <property type="evidence" value="ECO:0000318"/>
    <property type="project" value="GO_Central"/>
</dbReference>
<dbReference type="GO" id="GO:0020037">
    <property type="term" value="F:heme binding"/>
    <property type="evidence" value="ECO:0007669"/>
    <property type="project" value="InterPro"/>
</dbReference>
<dbReference type="GO" id="GO:0046872">
    <property type="term" value="F:metal ion binding"/>
    <property type="evidence" value="ECO:0007669"/>
    <property type="project" value="UniProtKB-KW"/>
</dbReference>
<dbReference type="GO" id="GO:0006123">
    <property type="term" value="P:mitochondrial electron transport, cytochrome c to oxygen"/>
    <property type="evidence" value="ECO:0000318"/>
    <property type="project" value="GO_Central"/>
</dbReference>
<dbReference type="GO" id="GO:0006122">
    <property type="term" value="P:mitochondrial electron transport, ubiquinol to cytochrome c"/>
    <property type="evidence" value="ECO:0000318"/>
    <property type="project" value="GO_Central"/>
</dbReference>
<dbReference type="FunFam" id="1.10.760.10:FF:000008">
    <property type="entry name" value="Cytochrome c"/>
    <property type="match status" value="1"/>
</dbReference>
<dbReference type="Gene3D" id="1.10.760.10">
    <property type="entry name" value="Cytochrome c-like domain"/>
    <property type="match status" value="1"/>
</dbReference>
<dbReference type="InterPro" id="IPR009056">
    <property type="entry name" value="Cyt_c-like_dom"/>
</dbReference>
<dbReference type="InterPro" id="IPR036909">
    <property type="entry name" value="Cyt_c-like_dom_sf"/>
</dbReference>
<dbReference type="InterPro" id="IPR002327">
    <property type="entry name" value="Cyt_c_1A/1B"/>
</dbReference>
<dbReference type="PANTHER" id="PTHR11961">
    <property type="entry name" value="CYTOCHROME C"/>
    <property type="match status" value="1"/>
</dbReference>
<dbReference type="Pfam" id="PF00034">
    <property type="entry name" value="Cytochrom_C"/>
    <property type="match status" value="1"/>
</dbReference>
<dbReference type="PRINTS" id="PR00604">
    <property type="entry name" value="CYTCHRMECIAB"/>
</dbReference>
<dbReference type="SUPFAM" id="SSF46626">
    <property type="entry name" value="Cytochrome c"/>
    <property type="match status" value="1"/>
</dbReference>
<dbReference type="PROSITE" id="PS51007">
    <property type="entry name" value="CYTC"/>
    <property type="match status" value="1"/>
</dbReference>
<accession>Q6GQE4</accession>
<keyword id="KW-0007">Acetylation</keyword>
<keyword id="KW-0249">Electron transport</keyword>
<keyword id="KW-0349">Heme</keyword>
<keyword id="KW-0408">Iron</keyword>
<keyword id="KW-0479">Metal-binding</keyword>
<keyword id="KW-0496">Mitochondrion</keyword>
<keyword id="KW-1185">Reference proteome</keyword>
<keyword id="KW-0679">Respiratory chain</keyword>
<keyword id="KW-0813">Transport</keyword>
<name>CYC1A_XENLA</name>
<reference key="1">
    <citation type="submission" date="2004-06" db="EMBL/GenBank/DDBJ databases">
        <authorList>
            <consortium name="NIH - Xenopus Gene Collection (XGC) project"/>
        </authorList>
    </citation>
    <scope>NUCLEOTIDE SEQUENCE [LARGE SCALE MRNA]</scope>
    <source>
        <tissue>Spleen</tissue>
    </source>
</reference>
<gene>
    <name type="primary">cycs-a</name>
</gene>
<sequence length="105" mass="11786">MGDAEKGKKIFIQKCAQCHTVEKTGKHKTGPNLWGLFGRKTGQAPGFSYTDANKSKGIVWGEDTLFEYLENPKKYIPGTKMIFAGIKKKNERLDLIAYLKKSTSE</sequence>